<dbReference type="EMBL" id="AY534249">
    <property type="protein sequence ID" value="AAT07098.1"/>
    <property type="molecule type" value="mRNA"/>
</dbReference>
<dbReference type="EMBL" id="AL671915">
    <property type="status" value="NOT_ANNOTATED_CDS"/>
    <property type="molecule type" value="Genomic_DNA"/>
</dbReference>
<dbReference type="EMBL" id="BC150896">
    <property type="protein sequence ID" value="AAI50897.1"/>
    <property type="molecule type" value="mRNA"/>
</dbReference>
<dbReference type="EMBL" id="BC150897">
    <property type="protein sequence ID" value="AAI50898.1"/>
    <property type="molecule type" value="mRNA"/>
</dbReference>
<dbReference type="CCDS" id="CCDS30391.1"/>
<dbReference type="RefSeq" id="NP_899142.2">
    <property type="nucleotide sequence ID" value="NM_183319.3"/>
</dbReference>
<dbReference type="BioGRID" id="237108">
    <property type="interactions" value="2"/>
</dbReference>
<dbReference type="FunCoup" id="Q5GH68">
    <property type="interactions" value="15"/>
</dbReference>
<dbReference type="STRING" id="10090.ENSMUSP00000033611"/>
<dbReference type="iPTMnet" id="Q5GH68"/>
<dbReference type="PhosphoSitePlus" id="Q5GH68"/>
<dbReference type="PaxDb" id="10090-ENSMUSP00000033611"/>
<dbReference type="ProteomicsDB" id="300001"/>
<dbReference type="Antibodypedia" id="28561">
    <property type="antibodies" value="83 antibodies from 17 providers"/>
</dbReference>
<dbReference type="DNASU" id="331524"/>
<dbReference type="Ensembl" id="ENSMUST00000033611.5">
    <property type="protein sequence ID" value="ENSMUSP00000033611.5"/>
    <property type="gene ID" value="ENSMUSG00000031258.5"/>
</dbReference>
<dbReference type="GeneID" id="331524"/>
<dbReference type="KEGG" id="mmu:331524"/>
<dbReference type="UCSC" id="uc009ufo.1">
    <property type="organism name" value="mouse"/>
</dbReference>
<dbReference type="AGR" id="MGI:3584011"/>
<dbReference type="CTD" id="402415"/>
<dbReference type="MGI" id="MGI:3584011">
    <property type="gene designation" value="Xkrx"/>
</dbReference>
<dbReference type="VEuPathDB" id="HostDB:ENSMUSG00000031258"/>
<dbReference type="eggNOG" id="ENOG502QSH6">
    <property type="taxonomic scope" value="Eukaryota"/>
</dbReference>
<dbReference type="GeneTree" id="ENSGT00390000003231"/>
<dbReference type="HOGENOM" id="CLU_037429_1_0_1"/>
<dbReference type="InParanoid" id="Q5GH68"/>
<dbReference type="OMA" id="SETYWMA"/>
<dbReference type="OrthoDB" id="10037417at2759"/>
<dbReference type="PhylomeDB" id="Q5GH68"/>
<dbReference type="TreeFam" id="TF331465"/>
<dbReference type="BioGRID-ORCS" id="331524">
    <property type="hits" value="1 hit in 79 CRISPR screens"/>
</dbReference>
<dbReference type="ChiTaRS" id="Xkrx">
    <property type="organism name" value="mouse"/>
</dbReference>
<dbReference type="PRO" id="PR:Q5GH68"/>
<dbReference type="Proteomes" id="UP000000589">
    <property type="component" value="Chromosome X"/>
</dbReference>
<dbReference type="RNAct" id="Q5GH68">
    <property type="molecule type" value="protein"/>
</dbReference>
<dbReference type="Bgee" id="ENSMUSG00000031258">
    <property type="expression patterns" value="Expressed in lip and 53 other cell types or tissues"/>
</dbReference>
<dbReference type="GO" id="GO:0005886">
    <property type="term" value="C:plasma membrane"/>
    <property type="evidence" value="ECO:0007669"/>
    <property type="project" value="UniProtKB-ARBA"/>
</dbReference>
<dbReference type="InterPro" id="IPR018629">
    <property type="entry name" value="XK-rel"/>
</dbReference>
<dbReference type="InterPro" id="IPR051773">
    <property type="entry name" value="XK-related_adapter"/>
</dbReference>
<dbReference type="PANTHER" id="PTHR14297">
    <property type="entry name" value="MEMBRANE TRANSPORT PROTEIN XK FAMILY MEMBER"/>
    <property type="match status" value="1"/>
</dbReference>
<dbReference type="PANTHER" id="PTHR14297:SF4">
    <property type="entry name" value="XK-RELATED PROTEIN 2"/>
    <property type="match status" value="1"/>
</dbReference>
<dbReference type="Pfam" id="PF09815">
    <property type="entry name" value="XK-related"/>
    <property type="match status" value="1"/>
</dbReference>
<name>XKR2_MOUSE</name>
<feature type="chain" id="PRO_0000190773" description="XK-related protein 2">
    <location>
        <begin position="1"/>
        <end position="449"/>
    </location>
</feature>
<feature type="transmembrane region" description="Helical" evidence="1">
    <location>
        <begin position="35"/>
        <end position="55"/>
    </location>
</feature>
<feature type="transmembrane region" description="Helical" evidence="1">
    <location>
        <begin position="68"/>
        <end position="88"/>
    </location>
</feature>
<feature type="transmembrane region" description="Helical" evidence="1">
    <location>
        <begin position="98"/>
        <end position="118"/>
    </location>
</feature>
<feature type="transmembrane region" description="Helical" evidence="1">
    <location>
        <begin position="174"/>
        <end position="194"/>
    </location>
</feature>
<feature type="transmembrane region" description="Helical" evidence="1">
    <location>
        <begin position="204"/>
        <end position="224"/>
    </location>
</feature>
<feature type="transmembrane region" description="Helical" evidence="1">
    <location>
        <begin position="241"/>
        <end position="261"/>
    </location>
</feature>
<feature type="transmembrane region" description="Helical" evidence="1">
    <location>
        <begin position="269"/>
        <end position="289"/>
    </location>
</feature>
<feature type="transmembrane region" description="Helical" evidence="1">
    <location>
        <begin position="306"/>
        <end position="326"/>
    </location>
</feature>
<feature type="transmembrane region" description="Helical" evidence="1">
    <location>
        <begin position="357"/>
        <end position="377"/>
    </location>
</feature>
<feature type="transmembrane region" description="Helical" evidence="1">
    <location>
        <begin position="382"/>
        <end position="402"/>
    </location>
</feature>
<comment type="subcellular location">
    <subcellularLocation>
        <location evidence="2">Membrane</location>
        <topology evidence="2">Multi-pass membrane protein</topology>
    </subcellularLocation>
</comment>
<comment type="similarity">
    <text evidence="2">Belongs to the XK family.</text>
</comment>
<proteinExistence type="evidence at transcript level"/>
<reference key="1">
    <citation type="submission" date="2004-01" db="EMBL/GenBank/DDBJ databases">
        <title>A superfamily of XK-related genes (XRG) widely expressed in vertebrates and invertebrates.</title>
        <authorList>
            <person name="Huang C.-H."/>
            <person name="Chen Y."/>
        </authorList>
    </citation>
    <scope>NUCLEOTIDE SEQUENCE [MRNA]</scope>
    <source>
        <strain>C57BL/6J</strain>
    </source>
</reference>
<reference key="2">
    <citation type="journal article" date="2009" name="PLoS Biol.">
        <title>Lineage-specific biology revealed by a finished genome assembly of the mouse.</title>
        <authorList>
            <person name="Church D.M."/>
            <person name="Goodstadt L."/>
            <person name="Hillier L.W."/>
            <person name="Zody M.C."/>
            <person name="Goldstein S."/>
            <person name="She X."/>
            <person name="Bult C.J."/>
            <person name="Agarwala R."/>
            <person name="Cherry J.L."/>
            <person name="DiCuccio M."/>
            <person name="Hlavina W."/>
            <person name="Kapustin Y."/>
            <person name="Meric P."/>
            <person name="Maglott D."/>
            <person name="Birtle Z."/>
            <person name="Marques A.C."/>
            <person name="Graves T."/>
            <person name="Zhou S."/>
            <person name="Teague B."/>
            <person name="Potamousis K."/>
            <person name="Churas C."/>
            <person name="Place M."/>
            <person name="Herschleb J."/>
            <person name="Runnheim R."/>
            <person name="Forrest D."/>
            <person name="Amos-Landgraf J."/>
            <person name="Schwartz D.C."/>
            <person name="Cheng Z."/>
            <person name="Lindblad-Toh K."/>
            <person name="Eichler E.E."/>
            <person name="Ponting C.P."/>
        </authorList>
    </citation>
    <scope>NUCLEOTIDE SEQUENCE [LARGE SCALE GENOMIC DNA]</scope>
    <source>
        <strain>C57BL/6J</strain>
    </source>
</reference>
<reference key="3">
    <citation type="journal article" date="2004" name="Genome Res.">
        <title>The status, quality, and expansion of the NIH full-length cDNA project: the Mammalian Gene Collection (MGC).</title>
        <authorList>
            <consortium name="The MGC Project Team"/>
        </authorList>
    </citation>
    <scope>NUCLEOTIDE SEQUENCE [LARGE SCALE MRNA]</scope>
    <source>
        <tissue>Brain</tissue>
    </source>
</reference>
<organism>
    <name type="scientific">Mus musculus</name>
    <name type="common">Mouse</name>
    <dbReference type="NCBI Taxonomy" id="10090"/>
    <lineage>
        <taxon>Eukaryota</taxon>
        <taxon>Metazoa</taxon>
        <taxon>Chordata</taxon>
        <taxon>Craniata</taxon>
        <taxon>Vertebrata</taxon>
        <taxon>Euteleostomi</taxon>
        <taxon>Mammalia</taxon>
        <taxon>Eutheria</taxon>
        <taxon>Euarchontoglires</taxon>
        <taxon>Glires</taxon>
        <taxon>Rodentia</taxon>
        <taxon>Myomorpha</taxon>
        <taxon>Muroidea</taxon>
        <taxon>Muridae</taxon>
        <taxon>Murinae</taxon>
        <taxon>Mus</taxon>
        <taxon>Mus</taxon>
    </lineage>
</organism>
<sequence>MDRVYEIPEEPNVVPISSLEEDVIRGPNPRFTFPFSILFSTFLYCGEAASALYMVRIYRKNNETFWMTYTFSFFMFSSIMVQLTLIFVHRDLAKDRPLSLFMHLILLGPVIRCLEAMIKYLTLWKKEGQEEPYVSLTRKKMLIAGQEVLIEWEVGHSIRTLAMHRNAYKRMSQIQAFLGSVPQLTYQLYVSLISAEVPLGRAVLMAFSLISVTYGATLCNMLAIQIKYDDYKIRLGPLEVLCITVWRTLEITSRLVILVLFSATLKLKAVPFLVLNFLIILFEPWVKFWRSGAQMPNNIEKNFSRVGTLVVLISVTILYAGINFSCWSAMQLKLADRDLVDKGQNWGHMGLHYSVRLVENVIMVLVFKYFGVKVLLNYCHSLIAVQLIIAYLISIGVMLLFFQYLHPLRSLFTNNVVDYLHCICCRRPRPERVENSETSCEADTTQSIV</sequence>
<accession>Q5GH68</accession>
<accession>A2AEK6</accession>
<gene>
    <name type="primary">Xkrx</name>
    <name type="synonym">Xkr2</name>
    <name type="synonym">Xrg2</name>
</gene>
<keyword id="KW-0472">Membrane</keyword>
<keyword id="KW-1185">Reference proteome</keyword>
<keyword id="KW-0812">Transmembrane</keyword>
<keyword id="KW-1133">Transmembrane helix</keyword>
<evidence type="ECO:0000255" key="1"/>
<evidence type="ECO:0000305" key="2"/>
<protein>
    <recommendedName>
        <fullName>XK-related protein 2</fullName>
    </recommendedName>
    <alternativeName>
        <fullName>X Kell blood group-related, X-linked</fullName>
    </alternativeName>
</protein>